<evidence type="ECO:0000256" key="1">
    <source>
        <dbReference type="SAM" id="MobiDB-lite"/>
    </source>
</evidence>
<evidence type="ECO:0000269" key="2">
    <source>
    </source>
</evidence>
<evidence type="ECO:0000269" key="3">
    <source>
    </source>
</evidence>
<evidence type="ECO:0000269" key="4">
    <source>
    </source>
</evidence>
<evidence type="ECO:0000305" key="5"/>
<evidence type="ECO:0000305" key="6">
    <source>
    </source>
</evidence>
<evidence type="ECO:0000312" key="7">
    <source>
        <dbReference type="EMBL" id="AAC73027.1"/>
    </source>
</evidence>
<evidence type="ECO:0007829" key="8">
    <source>
        <dbReference type="PDB" id="8BEF"/>
    </source>
</evidence>
<gene>
    <name type="ordered locus">At2g27730</name>
    <name type="ORF">F15K20.17</name>
</gene>
<reference evidence="7" key="1">
    <citation type="journal article" date="1999" name="Nature">
        <title>Sequence and analysis of chromosome 2 of the plant Arabidopsis thaliana.</title>
        <authorList>
            <person name="Lin X."/>
            <person name="Kaul S."/>
            <person name="Rounsley S.D."/>
            <person name="Shea T.P."/>
            <person name="Benito M.-I."/>
            <person name="Town C.D."/>
            <person name="Fujii C.Y."/>
            <person name="Mason T.M."/>
            <person name="Bowman C.L."/>
            <person name="Barnstead M.E."/>
            <person name="Feldblyum T.V."/>
            <person name="Buell C.R."/>
            <person name="Ketchum K.A."/>
            <person name="Lee J.J."/>
            <person name="Ronning C.M."/>
            <person name="Koo H.L."/>
            <person name="Moffat K.S."/>
            <person name="Cronin L.A."/>
            <person name="Shen M."/>
            <person name="Pai G."/>
            <person name="Van Aken S."/>
            <person name="Umayam L."/>
            <person name="Tallon L.J."/>
            <person name="Gill J.E."/>
            <person name="Adams M.D."/>
            <person name="Carrera A.J."/>
            <person name="Creasy T.H."/>
            <person name="Goodman H.M."/>
            <person name="Somerville C.R."/>
            <person name="Copenhaver G.P."/>
            <person name="Preuss D."/>
            <person name="Nierman W.C."/>
            <person name="White O."/>
            <person name="Eisen J.A."/>
            <person name="Salzberg S.L."/>
            <person name="Fraser C.M."/>
            <person name="Venter J.C."/>
        </authorList>
    </citation>
    <scope>NUCLEOTIDE SEQUENCE [LARGE SCALE GENOMIC DNA]</scope>
    <source>
        <strain>cv. Columbia</strain>
    </source>
</reference>
<reference evidence="5" key="2">
    <citation type="journal article" date="2017" name="Plant J.">
        <title>Araport11: a complete reannotation of the Arabidopsis thaliana reference genome.</title>
        <authorList>
            <person name="Cheng C.Y."/>
            <person name="Krishnakumar V."/>
            <person name="Chan A.P."/>
            <person name="Thibaud-Nissen F."/>
            <person name="Schobel S."/>
            <person name="Town C.D."/>
        </authorList>
    </citation>
    <scope>GENOME REANNOTATION</scope>
    <source>
        <strain>cv. Columbia</strain>
    </source>
</reference>
<reference key="3">
    <citation type="journal article" date="2003" name="Science">
        <title>Empirical analysis of transcriptional activity in the Arabidopsis genome.</title>
        <authorList>
            <person name="Yamada K."/>
            <person name="Lim J."/>
            <person name="Dale J.M."/>
            <person name="Chen H."/>
            <person name="Shinn P."/>
            <person name="Palm C.J."/>
            <person name="Southwick A.M."/>
            <person name="Wu H.C."/>
            <person name="Kim C.J."/>
            <person name="Nguyen M."/>
            <person name="Pham P.K."/>
            <person name="Cheuk R.F."/>
            <person name="Karlin-Newmann G."/>
            <person name="Liu S.X."/>
            <person name="Lam B."/>
            <person name="Sakano H."/>
            <person name="Wu T."/>
            <person name="Yu G."/>
            <person name="Miranda M."/>
            <person name="Quach H.L."/>
            <person name="Tripp M."/>
            <person name="Chang C.H."/>
            <person name="Lee J.M."/>
            <person name="Toriumi M.J."/>
            <person name="Chan M.M."/>
            <person name="Tang C.C."/>
            <person name="Onodera C.S."/>
            <person name="Deng J.M."/>
            <person name="Akiyama K."/>
            <person name="Ansari Y."/>
            <person name="Arakawa T."/>
            <person name="Banh J."/>
            <person name="Banno F."/>
            <person name="Bowser L."/>
            <person name="Brooks S.Y."/>
            <person name="Carninci P."/>
            <person name="Chao Q."/>
            <person name="Choy N."/>
            <person name="Enju A."/>
            <person name="Goldsmith A.D."/>
            <person name="Gurjal M."/>
            <person name="Hansen N.F."/>
            <person name="Hayashizaki Y."/>
            <person name="Johnson-Hopson C."/>
            <person name="Hsuan V.W."/>
            <person name="Iida K."/>
            <person name="Karnes M."/>
            <person name="Khan S."/>
            <person name="Koesema E."/>
            <person name="Ishida J."/>
            <person name="Jiang P.X."/>
            <person name="Jones T."/>
            <person name="Kawai J."/>
            <person name="Kamiya A."/>
            <person name="Meyers C."/>
            <person name="Nakajima M."/>
            <person name="Narusaka M."/>
            <person name="Seki M."/>
            <person name="Sakurai T."/>
            <person name="Satou M."/>
            <person name="Tamse R."/>
            <person name="Vaysberg M."/>
            <person name="Wallender E.K."/>
            <person name="Wong C."/>
            <person name="Yamamura Y."/>
            <person name="Yuan S."/>
            <person name="Shinozaki K."/>
            <person name="Davis R.W."/>
            <person name="Theologis A."/>
            <person name="Ecker J.R."/>
        </authorList>
    </citation>
    <scope>NUCLEOTIDE SEQUENCE [LARGE SCALE MRNA]</scope>
    <source>
        <strain>cv. Columbia</strain>
    </source>
</reference>
<reference evidence="5" key="4">
    <citation type="submission" date="2002-03" db="EMBL/GenBank/DDBJ databases">
        <title>Full-length cDNA from Arabidopsis thaliana.</title>
        <authorList>
            <person name="Brover V.V."/>
            <person name="Troukhan M.E."/>
            <person name="Alexandrov N.A."/>
            <person name="Lu Y.-P."/>
            <person name="Flavell R.B."/>
            <person name="Feldmann K.A."/>
        </authorList>
    </citation>
    <scope>NUCLEOTIDE SEQUENCE [LARGE SCALE MRNA]</scope>
</reference>
<reference evidence="5" key="5">
    <citation type="journal article" date="2001" name="Plant Physiol.">
        <title>Proteomic approach to identify novel mitochondrial proteins in Arabidopsis.</title>
        <authorList>
            <person name="Kruft V."/>
            <person name="Eubel H."/>
            <person name="Jaensch L."/>
            <person name="Werhahn W."/>
            <person name="Braun H.-P."/>
        </authorList>
    </citation>
    <scope>PROTEIN SEQUENCE OF 46-61</scope>
    <scope>SUBCELLULAR LOCATION</scope>
    <source>
        <tissue>Leaf</tissue>
        <tissue>Stem</tissue>
    </source>
</reference>
<reference key="6">
    <citation type="journal article" date="2004" name="Plant Cell">
        <title>Experimental analysis of the Arabidopsis mitochondrial proteome highlights signaling and regulatory components, provides assessment of targeting prediction programs, and indicates plant-specific mitochondrial proteins.</title>
        <authorList>
            <person name="Heazlewood J.L."/>
            <person name="Tonti-Filippini J.S."/>
            <person name="Gout A.M."/>
            <person name="Day D.A."/>
            <person name="Whelan J."/>
            <person name="Millar A.H."/>
        </authorList>
    </citation>
    <scope>IDENTIFICATION BY MASS SPECTROMETRY</scope>
    <scope>SUBCELLULAR LOCATION [LARGE SCALE ANALYSIS]</scope>
    <source>
        <strain>cv. Landsberg erecta</strain>
    </source>
</reference>
<reference key="7">
    <citation type="journal article" date="2015" name="J. Exp. Bot.">
        <title>Identification of cleavage sites and substrate proteins for two mitochondrial intermediate peptidases in Arabidopsis thaliana.</title>
        <authorList>
            <person name="Carrie C."/>
            <person name="Venne A.S."/>
            <person name="Zahedi R.P."/>
            <person name="Soll J."/>
        </authorList>
    </citation>
    <scope>IDENTIFICATION BY MASS SPECTROMETRY</scope>
    <scope>CLEAVAGE OF TRANSIT PEPTIDE AFTER PHE-14</scope>
</reference>
<feature type="transit peptide" description="Mitochondrion" evidence="4">
    <location>
        <begin position="1"/>
        <end position="14"/>
    </location>
</feature>
<feature type="chain" id="PRO_0000220587" description="Uncharacterized protein At2g27730, mitochondrial">
    <location>
        <begin position="15"/>
        <end position="113"/>
    </location>
</feature>
<feature type="region of interest" description="Disordered" evidence="1">
    <location>
        <begin position="41"/>
        <end position="79"/>
    </location>
</feature>
<feature type="compositionally biased region" description="Low complexity" evidence="1">
    <location>
        <begin position="55"/>
        <end position="73"/>
    </location>
</feature>
<feature type="sequence conflict" description="In Ref. 4; AAM64836." evidence="5" ref="4">
    <original>V</original>
    <variation>I</variation>
    <location>
        <position position="19"/>
    </location>
</feature>
<feature type="helix" evidence="8">
    <location>
        <begin position="80"/>
        <end position="101"/>
    </location>
</feature>
<protein>
    <recommendedName>
        <fullName>Uncharacterized protein At2g27730, mitochondrial</fullName>
    </recommendedName>
</protein>
<proteinExistence type="evidence at protein level"/>
<organism evidence="7">
    <name type="scientific">Arabidopsis thaliana</name>
    <name type="common">Mouse-ear cress</name>
    <dbReference type="NCBI Taxonomy" id="3702"/>
    <lineage>
        <taxon>Eukaryota</taxon>
        <taxon>Viridiplantae</taxon>
        <taxon>Streptophyta</taxon>
        <taxon>Embryophyta</taxon>
        <taxon>Tracheophyta</taxon>
        <taxon>Spermatophyta</taxon>
        <taxon>Magnoliopsida</taxon>
        <taxon>eudicotyledons</taxon>
        <taxon>Gunneridae</taxon>
        <taxon>Pentapetalae</taxon>
        <taxon>rosids</taxon>
        <taxon>malvids</taxon>
        <taxon>Brassicales</taxon>
        <taxon>Brassicaceae</taxon>
        <taxon>Camelineae</taxon>
        <taxon>Arabidopsis</taxon>
    </lineage>
</organism>
<keyword id="KW-0002">3D-structure</keyword>
<keyword id="KW-0903">Direct protein sequencing</keyword>
<keyword id="KW-0496">Mitochondrion</keyword>
<keyword id="KW-1185">Reference proteome</keyword>
<keyword id="KW-0809">Transit peptide</keyword>
<sequence>MATRNALRIVSRRFSSGKVLSEEERAAENVFIKKMEQEKLQKLARQGPGEQAAGSASEAKVAGATASASAESGPKVSEDKNRNYAVVAGVVAIVGSIGWYLKAGGKKQPEVQE</sequence>
<comment type="subcellular location">
    <subcellularLocation>
        <location evidence="2 3 6">Mitochondrion</location>
    </subcellularLocation>
</comment>
<dbReference type="EMBL" id="AC005824">
    <property type="protein sequence ID" value="AAC73027.1"/>
    <property type="molecule type" value="Genomic_DNA"/>
</dbReference>
<dbReference type="EMBL" id="CP002685">
    <property type="protein sequence ID" value="AEC08036.1"/>
    <property type="molecule type" value="Genomic_DNA"/>
</dbReference>
<dbReference type="EMBL" id="CP002685">
    <property type="protein sequence ID" value="ANM62018.1"/>
    <property type="molecule type" value="Genomic_DNA"/>
</dbReference>
<dbReference type="EMBL" id="CP002685">
    <property type="protein sequence ID" value="ANM62019.1"/>
    <property type="molecule type" value="Genomic_DNA"/>
</dbReference>
<dbReference type="EMBL" id="CP002685">
    <property type="protein sequence ID" value="ANM62020.1"/>
    <property type="molecule type" value="Genomic_DNA"/>
</dbReference>
<dbReference type="EMBL" id="AY059074">
    <property type="protein sequence ID" value="AAL15180.1"/>
    <property type="molecule type" value="mRNA"/>
</dbReference>
<dbReference type="EMBL" id="AY035140">
    <property type="protein sequence ID" value="AAK59644.1"/>
    <property type="molecule type" value="mRNA"/>
</dbReference>
<dbReference type="EMBL" id="AY087283">
    <property type="protein sequence ID" value="AAM64836.1"/>
    <property type="molecule type" value="mRNA"/>
</dbReference>
<dbReference type="PIR" id="C84676">
    <property type="entry name" value="C84676"/>
</dbReference>
<dbReference type="RefSeq" id="NP_001324201.1">
    <property type="nucleotide sequence ID" value="NM_001336124.1"/>
</dbReference>
<dbReference type="RefSeq" id="NP_001324202.1">
    <property type="nucleotide sequence ID" value="NM_001336122.1"/>
</dbReference>
<dbReference type="RefSeq" id="NP_001324203.1">
    <property type="nucleotide sequence ID" value="NM_001336123.1"/>
</dbReference>
<dbReference type="RefSeq" id="NP_565657.1">
    <property type="nucleotide sequence ID" value="NM_128332.4"/>
</dbReference>
<dbReference type="PDB" id="7A23">
    <property type="method" value="EM"/>
    <property type="resolution" value="3.70 A"/>
    <property type="chains" value="n=1-113"/>
</dbReference>
<dbReference type="PDB" id="7A24">
    <property type="method" value="EM"/>
    <property type="resolution" value="3.80 A"/>
    <property type="chains" value="n=1-113"/>
</dbReference>
<dbReference type="PDB" id="7AQQ">
    <property type="method" value="EM"/>
    <property type="resolution" value="3.06 A"/>
    <property type="chains" value="v=1-113"/>
</dbReference>
<dbReference type="PDB" id="7AR7">
    <property type="method" value="EM"/>
    <property type="resolution" value="3.72 A"/>
    <property type="chains" value="v=74-103"/>
</dbReference>
<dbReference type="PDB" id="7AR8">
    <property type="method" value="EM"/>
    <property type="resolution" value="3.53 A"/>
    <property type="chains" value="v=1-113"/>
</dbReference>
<dbReference type="PDB" id="7ARB">
    <property type="method" value="EM"/>
    <property type="resolution" value="3.41 A"/>
    <property type="chains" value="v=1-113"/>
</dbReference>
<dbReference type="PDB" id="8BEF">
    <property type="method" value="EM"/>
    <property type="resolution" value="2.13 A"/>
    <property type="chains" value="v=1-113"/>
</dbReference>
<dbReference type="PDB" id="8BPX">
    <property type="method" value="EM"/>
    <property type="resolution" value="2.09 A"/>
    <property type="chains" value="v=1-113"/>
</dbReference>
<dbReference type="PDB" id="8BQ5">
    <property type="method" value="EM"/>
    <property type="resolution" value="2.73 A"/>
    <property type="chains" value="v=1-113"/>
</dbReference>
<dbReference type="PDB" id="8BQ6">
    <property type="method" value="EM"/>
    <property type="resolution" value="2.80 A"/>
    <property type="chains" value="v=1-113"/>
</dbReference>
<dbReference type="PDBsum" id="7A23"/>
<dbReference type="PDBsum" id="7A24"/>
<dbReference type="PDBsum" id="7AQQ"/>
<dbReference type="PDBsum" id="7AR7"/>
<dbReference type="PDBsum" id="7AR8"/>
<dbReference type="PDBsum" id="7ARB"/>
<dbReference type="PDBsum" id="8BEF"/>
<dbReference type="PDBsum" id="8BPX"/>
<dbReference type="PDBsum" id="8BQ5"/>
<dbReference type="PDBsum" id="8BQ6"/>
<dbReference type="EMDB" id="EMD-11872"/>
<dbReference type="EMDB" id="EMD-11875"/>
<dbReference type="EMDB" id="EMD-11876"/>
<dbReference type="EMDB" id="EMD-11878"/>
<dbReference type="EMDB" id="EMD-16000"/>
<dbReference type="EMDB" id="EMD-16168"/>
<dbReference type="EMDB" id="EMD-16171"/>
<dbReference type="EMDB" id="EMD-16172"/>
<dbReference type="SMR" id="Q9ZUX4"/>
<dbReference type="FunCoup" id="Q9ZUX4">
    <property type="interactions" value="2277"/>
</dbReference>
<dbReference type="IntAct" id="Q9ZUX4">
    <property type="interactions" value="3"/>
</dbReference>
<dbReference type="MINT" id="Q9ZUX4"/>
<dbReference type="STRING" id="3702.Q9ZUX4"/>
<dbReference type="PaxDb" id="3702-AT2G27730.1"/>
<dbReference type="ProteomicsDB" id="245313"/>
<dbReference type="EnsemblPlants" id="AT2G27730.1">
    <property type="protein sequence ID" value="AT2G27730.1"/>
    <property type="gene ID" value="AT2G27730"/>
</dbReference>
<dbReference type="EnsemblPlants" id="AT2G27730.2">
    <property type="protein sequence ID" value="AT2G27730.2"/>
    <property type="gene ID" value="AT2G27730"/>
</dbReference>
<dbReference type="EnsemblPlants" id="AT2G27730.3">
    <property type="protein sequence ID" value="AT2G27730.3"/>
    <property type="gene ID" value="AT2G27730"/>
</dbReference>
<dbReference type="EnsemblPlants" id="AT2G27730.4">
    <property type="protein sequence ID" value="AT2G27730.4"/>
    <property type="gene ID" value="AT2G27730"/>
</dbReference>
<dbReference type="GeneID" id="817319"/>
<dbReference type="Gramene" id="AT2G27730.1">
    <property type="protein sequence ID" value="AT2G27730.1"/>
    <property type="gene ID" value="AT2G27730"/>
</dbReference>
<dbReference type="Gramene" id="AT2G27730.2">
    <property type="protein sequence ID" value="AT2G27730.2"/>
    <property type="gene ID" value="AT2G27730"/>
</dbReference>
<dbReference type="Gramene" id="AT2G27730.3">
    <property type="protein sequence ID" value="AT2G27730.3"/>
    <property type="gene ID" value="AT2G27730"/>
</dbReference>
<dbReference type="Gramene" id="AT2G27730.4">
    <property type="protein sequence ID" value="AT2G27730.4"/>
    <property type="gene ID" value="AT2G27730"/>
</dbReference>
<dbReference type="KEGG" id="ath:AT2G27730"/>
<dbReference type="Araport" id="AT2G27730"/>
<dbReference type="TAIR" id="AT2G27730"/>
<dbReference type="eggNOG" id="ENOG502S4G2">
    <property type="taxonomic scope" value="Eukaryota"/>
</dbReference>
<dbReference type="HOGENOM" id="CLU_126827_1_0_1"/>
<dbReference type="InParanoid" id="Q9ZUX4"/>
<dbReference type="OMA" id="GWYMISP"/>
<dbReference type="PhylomeDB" id="Q9ZUX4"/>
<dbReference type="BioCyc" id="ARA:AT2G27730-MONOMER"/>
<dbReference type="BioCyc" id="MetaCyc:AT2G27730-MONOMER"/>
<dbReference type="CD-CODE" id="4299E36E">
    <property type="entry name" value="Nucleolus"/>
</dbReference>
<dbReference type="PRO" id="PR:Q9ZUX4"/>
<dbReference type="Proteomes" id="UP000006548">
    <property type="component" value="Chromosome 2"/>
</dbReference>
<dbReference type="ExpressionAtlas" id="Q9ZUX4">
    <property type="expression patterns" value="baseline and differential"/>
</dbReference>
<dbReference type="GO" id="GO:0031966">
    <property type="term" value="C:mitochondrial membrane"/>
    <property type="evidence" value="ECO:0000314"/>
    <property type="project" value="TAIR"/>
</dbReference>
<dbReference type="GO" id="GO:0005739">
    <property type="term" value="C:mitochondrion"/>
    <property type="evidence" value="ECO:0000314"/>
    <property type="project" value="TAIR"/>
</dbReference>
<dbReference type="GO" id="GO:0005730">
    <property type="term" value="C:nucleolus"/>
    <property type="evidence" value="ECO:0007005"/>
    <property type="project" value="TAIR"/>
</dbReference>
<dbReference type="GO" id="GO:0005777">
    <property type="term" value="C:peroxisome"/>
    <property type="evidence" value="ECO:0007005"/>
    <property type="project" value="TAIR"/>
</dbReference>
<dbReference type="GO" id="GO:0000325">
    <property type="term" value="C:plant-type vacuole"/>
    <property type="evidence" value="ECO:0007005"/>
    <property type="project" value="TAIR"/>
</dbReference>
<dbReference type="GO" id="GO:0045271">
    <property type="term" value="C:respiratory chain complex I"/>
    <property type="evidence" value="ECO:0000314"/>
    <property type="project" value="TAIR"/>
</dbReference>
<dbReference type="GO" id="GO:0005507">
    <property type="term" value="F:copper ion binding"/>
    <property type="evidence" value="ECO:0007005"/>
    <property type="project" value="TAIR"/>
</dbReference>
<dbReference type="GO" id="GO:0009853">
    <property type="term" value="P:photorespiration"/>
    <property type="evidence" value="ECO:0000304"/>
    <property type="project" value="TAIR"/>
</dbReference>
<dbReference type="InterPro" id="IPR045284">
    <property type="entry name" value="At2g27730-like"/>
</dbReference>
<dbReference type="PANTHER" id="PTHR33878">
    <property type="entry name" value="OS08G0559000 PROTEIN"/>
    <property type="match status" value="1"/>
</dbReference>
<dbReference type="PANTHER" id="PTHR33878:SF1">
    <property type="entry name" value="OS08G0559000 PROTEIN"/>
    <property type="match status" value="1"/>
</dbReference>
<accession>Q9ZUX4</accession>
<accession>Q8LBD1</accession>
<name>UMP2_ARATH</name>